<keyword id="KW-0002">3D-structure</keyword>
<keyword id="KW-0025">Alternative splicing</keyword>
<keyword id="KW-0106">Calcium</keyword>
<keyword id="KW-0963">Cytoplasm</keyword>
<keyword id="KW-0378">Hydrolase</keyword>
<keyword id="KW-0442">Lipid degradation</keyword>
<keyword id="KW-0443">Lipid metabolism</keyword>
<keyword id="KW-0472">Membrane</keyword>
<keyword id="KW-0479">Metal-binding</keyword>
<keyword id="KW-1267">Proteomics identification</keyword>
<keyword id="KW-1185">Reference proteome</keyword>
<evidence type="ECO:0000250" key="1">
    <source>
        <dbReference type="UniProtKB" id="P47712"/>
    </source>
</evidence>
<evidence type="ECO:0000250" key="2">
    <source>
        <dbReference type="UniProtKB" id="Q50L43"/>
    </source>
</evidence>
<evidence type="ECO:0000255" key="3">
    <source>
        <dbReference type="PROSITE-ProRule" id="PRU00041"/>
    </source>
</evidence>
<evidence type="ECO:0000255" key="4">
    <source>
        <dbReference type="PROSITE-ProRule" id="PRU00555"/>
    </source>
</evidence>
<evidence type="ECO:0000269" key="5">
    <source>
    </source>
</evidence>
<evidence type="ECO:0000269" key="6">
    <source>
    </source>
</evidence>
<evidence type="ECO:0000269" key="7">
    <source>
    </source>
</evidence>
<evidence type="ECO:0000303" key="8">
    <source>
    </source>
</evidence>
<evidence type="ECO:0000303" key="9">
    <source>
    </source>
</evidence>
<evidence type="ECO:0000305" key="10"/>
<evidence type="ECO:0000305" key="11">
    <source>
    </source>
</evidence>
<evidence type="ECO:0000312" key="12">
    <source>
        <dbReference type="HGNC" id="HGNC:30038"/>
    </source>
</evidence>
<evidence type="ECO:0007744" key="13">
    <source>
        <dbReference type="PDB" id="5IXC"/>
    </source>
</evidence>
<evidence type="ECO:0007744" key="14">
    <source>
        <dbReference type="PDB" id="5IZ5"/>
    </source>
</evidence>
<evidence type="ECO:0007744" key="15">
    <source>
        <dbReference type="PDB" id="5IZR"/>
    </source>
</evidence>
<evidence type="ECO:0007829" key="16">
    <source>
        <dbReference type="PDB" id="5IXC"/>
    </source>
</evidence>
<evidence type="ECO:0007829" key="17">
    <source>
        <dbReference type="PDB" id="5IZ5"/>
    </source>
</evidence>
<evidence type="ECO:0007829" key="18">
    <source>
        <dbReference type="PDB" id="5IZR"/>
    </source>
</evidence>
<name>PA24D_HUMAN</name>
<dbReference type="EC" id="3.1.1.4" evidence="5"/>
<dbReference type="EMBL" id="AB090876">
    <property type="protein sequence ID" value="BAC67158.1"/>
    <property type="molecule type" value="mRNA"/>
</dbReference>
<dbReference type="EMBL" id="AC084693">
    <property type="status" value="NOT_ANNOTATED_CDS"/>
    <property type="molecule type" value="Genomic_DNA"/>
</dbReference>
<dbReference type="EMBL" id="BC034571">
    <property type="protein sequence ID" value="AAH34571.1"/>
    <property type="status" value="ALT_INIT"/>
    <property type="molecule type" value="mRNA"/>
</dbReference>
<dbReference type="CCDS" id="CCDS32203.1">
    <molecule id="Q86XP0-1"/>
</dbReference>
<dbReference type="RefSeq" id="NP_828848.3">
    <molecule id="Q86XP0-1"/>
    <property type="nucleotide sequence ID" value="NM_178034.4"/>
</dbReference>
<dbReference type="PDB" id="5IXC">
    <property type="method" value="X-ray"/>
    <property type="resolution" value="2.65 A"/>
    <property type="chains" value="A/B=2-810"/>
</dbReference>
<dbReference type="PDB" id="5IZ5">
    <property type="method" value="X-ray"/>
    <property type="resolution" value="2.20 A"/>
    <property type="chains" value="A/B=2-810"/>
</dbReference>
<dbReference type="PDB" id="5IZR">
    <property type="method" value="X-ray"/>
    <property type="resolution" value="3.25 A"/>
    <property type="chains" value="A/B/C/D=2-810"/>
</dbReference>
<dbReference type="PDBsum" id="5IXC"/>
<dbReference type="PDBsum" id="5IZ5"/>
<dbReference type="PDBsum" id="5IZR"/>
<dbReference type="SMR" id="Q86XP0"/>
<dbReference type="BioGRID" id="129664">
    <property type="interactions" value="40"/>
</dbReference>
<dbReference type="FunCoup" id="Q86XP0">
    <property type="interactions" value="1086"/>
</dbReference>
<dbReference type="IntAct" id="Q86XP0">
    <property type="interactions" value="25"/>
</dbReference>
<dbReference type="STRING" id="9606.ENSP00000290472"/>
<dbReference type="ChEMBL" id="CHEMBL2287"/>
<dbReference type="SwissLipids" id="SLP:000001080"/>
<dbReference type="iPTMnet" id="Q86XP0"/>
<dbReference type="PhosphoSitePlus" id="Q86XP0"/>
<dbReference type="BioMuta" id="PLA2G4D"/>
<dbReference type="DMDM" id="269849641"/>
<dbReference type="jPOST" id="Q86XP0"/>
<dbReference type="MassIVE" id="Q86XP0"/>
<dbReference type="PaxDb" id="9606-ENSP00000290472"/>
<dbReference type="PeptideAtlas" id="Q86XP0"/>
<dbReference type="ProteomicsDB" id="70307">
    <molecule id="Q86XP0-1"/>
</dbReference>
<dbReference type="ProteomicsDB" id="70308">
    <molecule id="Q86XP0-2"/>
</dbReference>
<dbReference type="Antibodypedia" id="23488">
    <property type="antibodies" value="83 antibodies from 24 providers"/>
</dbReference>
<dbReference type="DNASU" id="283748"/>
<dbReference type="Ensembl" id="ENST00000290472.4">
    <molecule id="Q86XP0-1"/>
    <property type="protein sequence ID" value="ENSP00000290472.3"/>
    <property type="gene ID" value="ENSG00000159337.7"/>
</dbReference>
<dbReference type="GeneID" id="283748"/>
<dbReference type="KEGG" id="hsa:283748"/>
<dbReference type="MANE-Select" id="ENST00000290472.4">
    <property type="protein sequence ID" value="ENSP00000290472.3"/>
    <property type="RefSeq nucleotide sequence ID" value="NM_178034.4"/>
    <property type="RefSeq protein sequence ID" value="NP_828848.3"/>
</dbReference>
<dbReference type="UCSC" id="uc001zox.3">
    <molecule id="Q86XP0-1"/>
    <property type="organism name" value="human"/>
</dbReference>
<dbReference type="AGR" id="HGNC:30038"/>
<dbReference type="CTD" id="283748"/>
<dbReference type="DisGeNET" id="283748"/>
<dbReference type="GeneCards" id="PLA2G4D"/>
<dbReference type="HGNC" id="HGNC:30038">
    <property type="gene designation" value="PLA2G4D"/>
</dbReference>
<dbReference type="HPA" id="ENSG00000159337">
    <property type="expression patterns" value="Tissue enhanced (prostate, skin, vagina)"/>
</dbReference>
<dbReference type="MIM" id="612864">
    <property type="type" value="gene"/>
</dbReference>
<dbReference type="neXtProt" id="NX_Q86XP0"/>
<dbReference type="OpenTargets" id="ENSG00000159337"/>
<dbReference type="PharmGKB" id="PA134974074"/>
<dbReference type="VEuPathDB" id="HostDB:ENSG00000159337"/>
<dbReference type="eggNOG" id="KOG1028">
    <property type="taxonomic scope" value="Eukaryota"/>
</dbReference>
<dbReference type="eggNOG" id="KOG1325">
    <property type="taxonomic scope" value="Eukaryota"/>
</dbReference>
<dbReference type="GeneTree" id="ENSGT01030000234606"/>
<dbReference type="HOGENOM" id="CLU_011663_0_0_1"/>
<dbReference type="InParanoid" id="Q86XP0"/>
<dbReference type="OMA" id="ACWRLTV"/>
<dbReference type="OrthoDB" id="270970at2759"/>
<dbReference type="PAN-GO" id="Q86XP0">
    <property type="GO annotations" value="5 GO annotations based on evolutionary models"/>
</dbReference>
<dbReference type="PhylomeDB" id="Q86XP0"/>
<dbReference type="TreeFam" id="TF325228"/>
<dbReference type="BRENDA" id="3.1.1.4">
    <property type="organism ID" value="2681"/>
</dbReference>
<dbReference type="PathwayCommons" id="Q86XP0"/>
<dbReference type="Reactome" id="R-HSA-1482788">
    <property type="pathway name" value="Acyl chain remodelling of PC"/>
</dbReference>
<dbReference type="Reactome" id="R-HSA-1482801">
    <property type="pathway name" value="Acyl chain remodelling of PS"/>
</dbReference>
<dbReference type="Reactome" id="R-HSA-1482839">
    <property type="pathway name" value="Acyl chain remodelling of PE"/>
</dbReference>
<dbReference type="Reactome" id="R-HSA-1482922">
    <property type="pathway name" value="Acyl chain remodelling of PI"/>
</dbReference>
<dbReference type="Reactome" id="R-HSA-1482925">
    <property type="pathway name" value="Acyl chain remodelling of PG"/>
</dbReference>
<dbReference type="Reactome" id="R-HSA-1483115">
    <property type="pathway name" value="Hydrolysis of LPC"/>
</dbReference>
<dbReference type="Reactome" id="R-HSA-1483166">
    <property type="pathway name" value="Synthesis of PA"/>
</dbReference>
<dbReference type="SignaLink" id="Q86XP0"/>
<dbReference type="UniPathway" id="UPA00199"/>
<dbReference type="BioGRID-ORCS" id="283748">
    <property type="hits" value="17 hits in 1146 CRISPR screens"/>
</dbReference>
<dbReference type="EvolutionaryTrace" id="Q86XP0"/>
<dbReference type="GenomeRNAi" id="283748"/>
<dbReference type="Pharos" id="Q86XP0">
    <property type="development level" value="Tbio"/>
</dbReference>
<dbReference type="PRO" id="PR:Q86XP0"/>
<dbReference type="Proteomes" id="UP000005640">
    <property type="component" value="Chromosome 15"/>
</dbReference>
<dbReference type="RNAct" id="Q86XP0">
    <property type="molecule type" value="protein"/>
</dbReference>
<dbReference type="Bgee" id="ENSG00000159337">
    <property type="expression patterns" value="Expressed in skin of abdomen and 51 other cell types or tissues"/>
</dbReference>
<dbReference type="GO" id="GO:0005829">
    <property type="term" value="C:cytosol"/>
    <property type="evidence" value="ECO:0000318"/>
    <property type="project" value="GO_Central"/>
</dbReference>
<dbReference type="GO" id="GO:0016020">
    <property type="term" value="C:membrane"/>
    <property type="evidence" value="ECO:0007669"/>
    <property type="project" value="UniProtKB-SubCell"/>
</dbReference>
<dbReference type="GO" id="GO:0005509">
    <property type="term" value="F:calcium ion binding"/>
    <property type="evidence" value="ECO:0000318"/>
    <property type="project" value="GO_Central"/>
</dbReference>
<dbReference type="GO" id="GO:0047498">
    <property type="term" value="F:calcium-dependent phospholipase A2 activity"/>
    <property type="evidence" value="ECO:0000314"/>
    <property type="project" value="UniProtKB"/>
</dbReference>
<dbReference type="GO" id="GO:0005544">
    <property type="term" value="F:calcium-dependent phospholipid binding"/>
    <property type="evidence" value="ECO:0000318"/>
    <property type="project" value="GO_Central"/>
</dbReference>
<dbReference type="GO" id="GO:0008970">
    <property type="term" value="F:phospholipase A1 activity"/>
    <property type="evidence" value="ECO:0000304"/>
    <property type="project" value="Reactome"/>
</dbReference>
<dbReference type="GO" id="GO:0006631">
    <property type="term" value="P:fatty acid metabolic process"/>
    <property type="evidence" value="ECO:0007669"/>
    <property type="project" value="UniProtKB-UniPathway"/>
</dbReference>
<dbReference type="GO" id="GO:0046475">
    <property type="term" value="P:glycerophospholipid catabolic process"/>
    <property type="evidence" value="ECO:0000314"/>
    <property type="project" value="UniProtKB"/>
</dbReference>
<dbReference type="GO" id="GO:0036148">
    <property type="term" value="P:phosphatidylglycerol acyl-chain remodeling"/>
    <property type="evidence" value="ECO:0000304"/>
    <property type="project" value="Reactome"/>
</dbReference>
<dbReference type="GO" id="GO:0036149">
    <property type="term" value="P:phosphatidylinositol acyl-chain remodeling"/>
    <property type="evidence" value="ECO:0000304"/>
    <property type="project" value="Reactome"/>
</dbReference>
<dbReference type="CDD" id="cd04036">
    <property type="entry name" value="C2_cPLA2"/>
    <property type="match status" value="1"/>
</dbReference>
<dbReference type="CDD" id="cd07201">
    <property type="entry name" value="cPLA2_Grp-IVB-IVD-IVE-IVF"/>
    <property type="match status" value="1"/>
</dbReference>
<dbReference type="FunFam" id="2.60.40.150:FF:000030">
    <property type="entry name" value="Phospholipase A2"/>
    <property type="match status" value="1"/>
</dbReference>
<dbReference type="FunFam" id="3.40.1090.10:FF:000002">
    <property type="entry name" value="Phospholipase A2"/>
    <property type="match status" value="1"/>
</dbReference>
<dbReference type="Gene3D" id="2.60.40.150">
    <property type="entry name" value="C2 domain"/>
    <property type="match status" value="1"/>
</dbReference>
<dbReference type="Gene3D" id="3.40.1090.10">
    <property type="entry name" value="Cytosolic phospholipase A2 catalytic domain"/>
    <property type="match status" value="1"/>
</dbReference>
<dbReference type="InterPro" id="IPR016035">
    <property type="entry name" value="Acyl_Trfase/lysoPLipase"/>
</dbReference>
<dbReference type="InterPro" id="IPR041847">
    <property type="entry name" value="C2_cPLA2"/>
</dbReference>
<dbReference type="InterPro" id="IPR000008">
    <property type="entry name" value="C2_dom"/>
</dbReference>
<dbReference type="InterPro" id="IPR035892">
    <property type="entry name" value="C2_domain_sf"/>
</dbReference>
<dbReference type="InterPro" id="IPR040723">
    <property type="entry name" value="cPLA2_C2"/>
</dbReference>
<dbReference type="InterPro" id="IPR002642">
    <property type="entry name" value="LysoPLipase_cat_dom"/>
</dbReference>
<dbReference type="PANTHER" id="PTHR10728">
    <property type="entry name" value="CYTOSOLIC PHOSPHOLIPASE A2"/>
    <property type="match status" value="1"/>
</dbReference>
<dbReference type="PANTHER" id="PTHR10728:SF31">
    <property type="entry name" value="CYTOSOLIC PHOSPHOLIPASE A2 DELTA"/>
    <property type="match status" value="1"/>
</dbReference>
<dbReference type="Pfam" id="PF00168">
    <property type="entry name" value="C2"/>
    <property type="match status" value="1"/>
</dbReference>
<dbReference type="Pfam" id="PF18695">
    <property type="entry name" value="cPLA2_C2"/>
    <property type="match status" value="1"/>
</dbReference>
<dbReference type="Pfam" id="PF01735">
    <property type="entry name" value="PLA2_B"/>
    <property type="match status" value="1"/>
</dbReference>
<dbReference type="SMART" id="SM00239">
    <property type="entry name" value="C2"/>
    <property type="match status" value="1"/>
</dbReference>
<dbReference type="SMART" id="SM00022">
    <property type="entry name" value="PLAc"/>
    <property type="match status" value="1"/>
</dbReference>
<dbReference type="SUPFAM" id="SSF49562">
    <property type="entry name" value="C2 domain (Calcium/lipid-binding domain, CaLB)"/>
    <property type="match status" value="1"/>
</dbReference>
<dbReference type="SUPFAM" id="SSF52151">
    <property type="entry name" value="FabD/lysophospholipase-like"/>
    <property type="match status" value="1"/>
</dbReference>
<dbReference type="PROSITE" id="PS50004">
    <property type="entry name" value="C2"/>
    <property type="match status" value="1"/>
</dbReference>
<dbReference type="PROSITE" id="PS51210">
    <property type="entry name" value="PLA2C"/>
    <property type="match status" value="1"/>
</dbReference>
<feature type="chain" id="PRO_0000247023" description="Cytosolic phospholipase A2 delta">
    <location>
        <begin position="1"/>
        <end position="818"/>
    </location>
</feature>
<feature type="domain" description="C2" evidence="3">
    <location>
        <begin position="5"/>
        <end position="124"/>
    </location>
</feature>
<feature type="domain" description="PLA2c" evidence="4">
    <location>
        <begin position="273"/>
        <end position="818"/>
    </location>
</feature>
<feature type="active site" description="Nucleophile" evidence="7 13 15">
    <location>
        <position position="361"/>
    </location>
</feature>
<feature type="active site" description="Proton acceptor" evidence="1">
    <location>
        <position position="647"/>
    </location>
</feature>
<feature type="binding site" evidence="3">
    <location>
        <position position="38"/>
    </location>
    <ligand>
        <name>Ca(2+)</name>
        <dbReference type="ChEBI" id="CHEBI:29108"/>
        <label>1</label>
    </ligand>
</feature>
<feature type="binding site" evidence="3">
    <location>
        <position position="38"/>
    </location>
    <ligand>
        <name>Ca(2+)</name>
        <dbReference type="ChEBI" id="CHEBI:29108"/>
        <label>2</label>
    </ligand>
</feature>
<feature type="binding site" evidence="3">
    <location>
        <position position="44"/>
    </location>
    <ligand>
        <name>Ca(2+)</name>
        <dbReference type="ChEBI" id="CHEBI:29108"/>
        <label>1</label>
    </ligand>
</feature>
<feature type="binding site" evidence="3">
    <location>
        <position position="94"/>
    </location>
    <ligand>
        <name>Ca(2+)</name>
        <dbReference type="ChEBI" id="CHEBI:29108"/>
        <label>1</label>
    </ligand>
</feature>
<feature type="binding site" evidence="3">
    <location>
        <position position="94"/>
    </location>
    <ligand>
        <name>Ca(2+)</name>
        <dbReference type="ChEBI" id="CHEBI:29108"/>
        <label>2</label>
    </ligand>
</feature>
<feature type="binding site" evidence="3">
    <location>
        <position position="96"/>
    </location>
    <ligand>
        <name>Ca(2+)</name>
        <dbReference type="ChEBI" id="CHEBI:29108"/>
        <label>1</label>
    </ligand>
</feature>
<feature type="binding site" evidence="3">
    <location>
        <position position="96"/>
    </location>
    <ligand>
        <name>Ca(2+)</name>
        <dbReference type="ChEBI" id="CHEBI:29108"/>
        <label>2</label>
    </ligand>
</feature>
<feature type="binding site" evidence="3">
    <location>
        <position position="102"/>
    </location>
    <ligand>
        <name>Ca(2+)</name>
        <dbReference type="ChEBI" id="CHEBI:29108"/>
        <label>2</label>
    </ligand>
</feature>
<feature type="binding site" evidence="7 13 15">
    <location>
        <begin position="330"/>
        <end position="331"/>
    </location>
    <ligand>
        <name>substrate</name>
    </ligand>
</feature>
<feature type="splice variant" id="VSP_019881" description="In isoform 2." evidence="9">
    <original>ALQQTELYCRARGLPFPRVEPSPQDQHQPRECHLFSDPACPE</original>
    <variation>VPWSPQGNPSAQPGQAPEASSRATEPLPHTAGVPKGRRGVRP</variation>
    <location>
        <begin position="682"/>
        <end position="723"/>
    </location>
</feature>
<feature type="splice variant" id="VSP_019882" description="In isoform 2." evidence="9">
    <location>
        <begin position="724"/>
        <end position="818"/>
    </location>
</feature>
<feature type="sequence variant" id="VAR_057676" description="In dbSNP:rs11635685.">
    <original>P</original>
    <variation>R</variation>
    <location>
        <position position="275"/>
    </location>
</feature>
<feature type="sequence variant" id="VAR_057677" description="In dbSNP:rs4924618.">
    <original>S</original>
    <variation>T</variation>
    <location>
        <position position="434"/>
    </location>
</feature>
<feature type="sequence variant" id="VAR_027049" description="In dbSNP:rs17747505.">
    <original>R</original>
    <variation>W</variation>
    <location>
        <position position="573"/>
    </location>
</feature>
<feature type="sequence variant" id="VAR_027050" description="In dbSNP:rs17690899.">
    <original>A</original>
    <variation>G</variation>
    <location>
        <position position="649"/>
    </location>
</feature>
<feature type="sequence variant" id="VAR_027051" description="In dbSNP:rs528906489." evidence="6">
    <original>R</original>
    <variation>G</variation>
    <location>
        <position position="747"/>
    </location>
</feature>
<feature type="sequence variant" id="VAR_057678" description="In dbSNP:rs750052.">
    <original>R</original>
    <variation>Q</variation>
    <location>
        <position position="783"/>
    </location>
</feature>
<feature type="sequence variant" id="VAR_057679" description="In dbSNP:rs750051.">
    <original>R</original>
    <variation>Q</variation>
    <location>
        <position position="807"/>
    </location>
</feature>
<feature type="sequence conflict" description="In Ref. 1; BAC67158." evidence="10" ref="1">
    <original>P</original>
    <variation>T</variation>
    <location>
        <position position="10"/>
    </location>
</feature>
<feature type="strand" evidence="17">
    <location>
        <begin position="17"/>
        <end position="19"/>
    </location>
</feature>
<feature type="strand" evidence="17">
    <location>
        <begin position="21"/>
        <end position="33"/>
    </location>
</feature>
<feature type="turn" evidence="16">
    <location>
        <begin position="38"/>
        <end position="40"/>
    </location>
</feature>
<feature type="strand" evidence="17">
    <location>
        <begin position="45"/>
        <end position="51"/>
    </location>
</feature>
<feature type="strand" evidence="17">
    <location>
        <begin position="71"/>
        <end position="81"/>
    </location>
</feature>
<feature type="strand" evidence="17">
    <location>
        <begin position="87"/>
        <end position="94"/>
    </location>
</feature>
<feature type="strand" evidence="17">
    <location>
        <begin position="97"/>
        <end position="99"/>
    </location>
</feature>
<feature type="strand" evidence="17">
    <location>
        <begin position="102"/>
        <end position="110"/>
    </location>
</feature>
<feature type="helix" evidence="17">
    <location>
        <begin position="111"/>
        <end position="113"/>
    </location>
</feature>
<feature type="strand" evidence="17">
    <location>
        <begin position="120"/>
        <end position="124"/>
    </location>
</feature>
<feature type="strand" evidence="17">
    <location>
        <begin position="133"/>
        <end position="142"/>
    </location>
</feature>
<feature type="strand" evidence="17">
    <location>
        <begin position="148"/>
        <end position="152"/>
    </location>
</feature>
<feature type="strand" evidence="17">
    <location>
        <begin position="154"/>
        <end position="158"/>
    </location>
</feature>
<feature type="strand" evidence="17">
    <location>
        <begin position="161"/>
        <end position="167"/>
    </location>
</feature>
<feature type="strand" evidence="17">
    <location>
        <begin position="183"/>
        <end position="189"/>
    </location>
</feature>
<feature type="strand" evidence="17">
    <location>
        <begin position="192"/>
        <end position="194"/>
    </location>
</feature>
<feature type="strand" evidence="17">
    <location>
        <begin position="196"/>
        <end position="200"/>
    </location>
</feature>
<feature type="turn" evidence="17">
    <location>
        <begin position="201"/>
        <end position="203"/>
    </location>
</feature>
<feature type="strand" evidence="17">
    <location>
        <begin position="206"/>
        <end position="212"/>
    </location>
</feature>
<feature type="strand" evidence="17">
    <location>
        <begin position="217"/>
        <end position="225"/>
    </location>
</feature>
<feature type="strand" evidence="17">
    <location>
        <begin position="230"/>
        <end position="232"/>
    </location>
</feature>
<feature type="strand" evidence="17">
    <location>
        <begin position="240"/>
        <end position="244"/>
    </location>
</feature>
<feature type="strand" evidence="17">
    <location>
        <begin position="251"/>
        <end position="257"/>
    </location>
</feature>
<feature type="strand" evidence="17">
    <location>
        <begin position="260"/>
        <end position="262"/>
    </location>
</feature>
<feature type="strand" evidence="17">
    <location>
        <begin position="265"/>
        <end position="273"/>
    </location>
</feature>
<feature type="strand" evidence="17">
    <location>
        <begin position="279"/>
        <end position="282"/>
    </location>
</feature>
<feature type="helix" evidence="17">
    <location>
        <begin position="288"/>
        <end position="309"/>
    </location>
</feature>
<feature type="helix" evidence="17">
    <location>
        <begin position="317"/>
        <end position="319"/>
    </location>
</feature>
<feature type="strand" evidence="17">
    <location>
        <begin position="323"/>
        <end position="327"/>
    </location>
</feature>
<feature type="helix" evidence="17">
    <location>
        <begin position="331"/>
        <end position="347"/>
    </location>
</feature>
<feature type="helix" evidence="17">
    <location>
        <begin position="351"/>
        <end position="353"/>
    </location>
</feature>
<feature type="strand" evidence="17">
    <location>
        <begin position="356"/>
        <end position="359"/>
    </location>
</feature>
<feature type="helix" evidence="17">
    <location>
        <begin position="363"/>
        <end position="371"/>
    </location>
</feature>
<feature type="helix" evidence="17">
    <location>
        <begin position="376"/>
        <end position="378"/>
    </location>
</feature>
<feature type="helix" evidence="17">
    <location>
        <begin position="382"/>
        <end position="393"/>
    </location>
</feature>
<feature type="helix" evidence="17">
    <location>
        <begin position="396"/>
        <end position="398"/>
    </location>
</feature>
<feature type="helix" evidence="17">
    <location>
        <begin position="402"/>
        <end position="418"/>
    </location>
</feature>
<feature type="helix" evidence="17">
    <location>
        <begin position="424"/>
        <end position="436"/>
    </location>
</feature>
<feature type="strand" evidence="17">
    <location>
        <begin position="437"/>
        <end position="439"/>
    </location>
</feature>
<feature type="helix" evidence="17">
    <location>
        <begin position="445"/>
        <end position="452"/>
    </location>
</feature>
<feature type="strand" evidence="17">
    <location>
        <begin position="459"/>
        <end position="466"/>
    </location>
</feature>
<feature type="turn" evidence="17">
    <location>
        <begin position="469"/>
        <end position="473"/>
    </location>
</feature>
<feature type="strand" evidence="17">
    <location>
        <begin position="474"/>
        <end position="476"/>
    </location>
</feature>
<feature type="strand" evidence="17">
    <location>
        <begin position="479"/>
        <end position="483"/>
    </location>
</feature>
<feature type="strand" evidence="17">
    <location>
        <begin position="488"/>
        <end position="490"/>
    </location>
</feature>
<feature type="turn" evidence="17">
    <location>
        <begin position="491"/>
        <end position="494"/>
    </location>
</feature>
<feature type="strand" evidence="17">
    <location>
        <begin position="495"/>
        <end position="497"/>
    </location>
</feature>
<feature type="helix" evidence="17">
    <location>
        <begin position="499"/>
        <end position="501"/>
    </location>
</feature>
<feature type="strand" evidence="17">
    <location>
        <begin position="504"/>
        <end position="507"/>
    </location>
</feature>
<feature type="strand" evidence="17">
    <location>
        <begin position="510"/>
        <end position="513"/>
    </location>
</feature>
<feature type="helix" evidence="17">
    <location>
        <begin position="520"/>
        <end position="527"/>
    </location>
</feature>
<feature type="turn" evidence="17">
    <location>
        <begin position="530"/>
        <end position="533"/>
    </location>
</feature>
<feature type="helix" evidence="17">
    <location>
        <begin position="537"/>
        <end position="539"/>
    </location>
</feature>
<feature type="helix" evidence="16">
    <location>
        <begin position="577"/>
        <end position="579"/>
    </location>
</feature>
<feature type="strand" evidence="17">
    <location>
        <begin position="581"/>
        <end position="583"/>
    </location>
</feature>
<feature type="helix" evidence="17">
    <location>
        <begin position="584"/>
        <end position="590"/>
    </location>
</feature>
<feature type="turn" evidence="17">
    <location>
        <begin position="605"/>
        <end position="608"/>
    </location>
</feature>
<feature type="strand" evidence="17">
    <location>
        <begin position="610"/>
        <end position="612"/>
    </location>
</feature>
<feature type="helix" evidence="17">
    <location>
        <begin position="613"/>
        <end position="615"/>
    </location>
</feature>
<feature type="helix" evidence="17">
    <location>
        <begin position="618"/>
        <end position="621"/>
    </location>
</feature>
<feature type="strand" evidence="17">
    <location>
        <begin position="623"/>
        <end position="625"/>
    </location>
</feature>
<feature type="strand" evidence="17">
    <location>
        <begin position="628"/>
        <end position="631"/>
    </location>
</feature>
<feature type="turn" evidence="17">
    <location>
        <begin position="634"/>
        <end position="636"/>
    </location>
</feature>
<feature type="helix" evidence="17">
    <location>
        <begin position="648"/>
        <end position="650"/>
    </location>
</feature>
<feature type="helix" evidence="17">
    <location>
        <begin position="656"/>
        <end position="660"/>
    </location>
</feature>
<feature type="strand" evidence="17">
    <location>
        <begin position="667"/>
        <end position="672"/>
    </location>
</feature>
<feature type="helix" evidence="17">
    <location>
        <begin position="681"/>
        <end position="692"/>
    </location>
</feature>
<feature type="helix" evidence="17">
    <location>
        <begin position="704"/>
        <end position="708"/>
    </location>
</feature>
<feature type="strand" evidence="17">
    <location>
        <begin position="714"/>
        <end position="716"/>
    </location>
</feature>
<feature type="strand" evidence="16">
    <location>
        <begin position="719"/>
        <end position="723"/>
    </location>
</feature>
<feature type="strand" evidence="17">
    <location>
        <begin position="726"/>
        <end position="730"/>
    </location>
</feature>
<feature type="turn" evidence="17">
    <location>
        <begin position="736"/>
        <end position="739"/>
    </location>
</feature>
<feature type="strand" evidence="17">
    <location>
        <begin position="740"/>
        <end position="742"/>
    </location>
</feature>
<feature type="turn" evidence="17">
    <location>
        <begin position="749"/>
        <end position="751"/>
    </location>
</feature>
<feature type="helix" evidence="17">
    <location>
        <begin position="753"/>
        <end position="755"/>
    </location>
</feature>
<feature type="strand" evidence="18">
    <location>
        <begin position="760"/>
        <end position="763"/>
    </location>
</feature>
<feature type="helix" evidence="17">
    <location>
        <begin position="775"/>
        <end position="790"/>
    </location>
</feature>
<feature type="helix" evidence="17">
    <location>
        <begin position="793"/>
        <end position="806"/>
    </location>
</feature>
<feature type="sequence conflict" description="In Ref. 2; AAH34571." evidence="10" ref="2">
    <original>G</original>
    <variation>R</variation>
    <location sequence="Q86XP0-2">
        <position position="713"/>
    </location>
</feature>
<accession>Q86XP0</accession>
<accession>Q8N176</accession>
<organism>
    <name type="scientific">Homo sapiens</name>
    <name type="common">Human</name>
    <dbReference type="NCBI Taxonomy" id="9606"/>
    <lineage>
        <taxon>Eukaryota</taxon>
        <taxon>Metazoa</taxon>
        <taxon>Chordata</taxon>
        <taxon>Craniata</taxon>
        <taxon>Vertebrata</taxon>
        <taxon>Euteleostomi</taxon>
        <taxon>Mammalia</taxon>
        <taxon>Eutheria</taxon>
        <taxon>Euarchontoglires</taxon>
        <taxon>Primates</taxon>
        <taxon>Haplorrhini</taxon>
        <taxon>Catarrhini</taxon>
        <taxon>Hominidae</taxon>
        <taxon>Homo</taxon>
    </lineage>
</organism>
<sequence>MESLSPGGPPGHPYQGEASTCWQLTVRVLEARNLRWADLLSEADPYVILQLSTAPGMKFKTKTLTDTSHPVWNEAFRFLIQSQVKNVLELSIYDEDSVTEDDICFKVLYDISEVLPGKLLRKTFSQSPQGEEELDVEFLMEETSDRPENLITNKVIVARELSCLDVHLDSTGSTAVVADQDKLELELVLKGSYEDTQTSFLGTASAFRFHYMAALETELSGRLRSSRSNGWNGDNSAGYLTVPLRPLTIGKEVTMDVPAPNAPGVRLQLKAEGCPEELAVHLGFNLCAEEQAFLSRRKQVVAKALKQALQLDRDLQEDEVPVVGIMATGGGARAMTSLYGHLLALQKLGLLDCVTYFSGISGSTWTMAHLYGDPEWSQRDLEGPIRYAREHLAKSKLEVFSPERLASYRRELELRAEQGHPTTFVDLWALVLESMLHGQVMDQKLSGQRAALERGQNPLPLYLSLNVKENNLETLDFKEWVEFSPYEVGFLKYGAFVPPELFGSEFFMGRLMRRIPEPRICFLEAIWSNIFSLNLLDAWYDLTSSGESWKQHIKDKTRSLEKEPLTTSGTSSRLEASWLQPGTALAQAFKGFLTGRPLHQRSPNFLQGLQLHQDYCSHKDFSTWADYQLDSMPSQLTPKEPRLCLVDAAYFINTSSPSMFRPGRRLDLILSFDYSLSAPFEALQQTELYCRARGLPFPRVEPSPQDQHQPRECHLFSDPACPEAPILLHFPLVNASFKDHSAPGVQRSPAELQGGQVDLTGATCPYTLSNMTYKEEDFERLLRLSDYNVQTSQGAILQALRTALKHRTLEARPPRAQT</sequence>
<proteinExistence type="evidence at protein level"/>
<protein>
    <recommendedName>
        <fullName evidence="10">Cytosolic phospholipase A2 delta</fullName>
        <shortName evidence="8">cPLA2-delta</shortName>
        <ecNumber evidence="5">3.1.1.4</ecNumber>
    </recommendedName>
    <alternativeName>
        <fullName>Phospholipase A2 group IVD</fullName>
    </alternativeName>
</protein>
<comment type="function">
    <text evidence="5">Calcium-dependent phospholipase A2 that selectively hydrolyzes glycerophospholipids in the sn-2 position (PubMed:14709560). Has a preference for linoleic acid at the sn-2 position (PubMed:14709560).</text>
</comment>
<comment type="catalytic activity">
    <reaction evidence="5">
        <text>a 1,2-diacyl-sn-glycero-3-phosphocholine + H2O = a 1-acyl-sn-glycero-3-phosphocholine + a fatty acid + H(+)</text>
        <dbReference type="Rhea" id="RHEA:15801"/>
        <dbReference type="ChEBI" id="CHEBI:15377"/>
        <dbReference type="ChEBI" id="CHEBI:15378"/>
        <dbReference type="ChEBI" id="CHEBI:28868"/>
        <dbReference type="ChEBI" id="CHEBI:57643"/>
        <dbReference type="ChEBI" id="CHEBI:58168"/>
        <dbReference type="EC" id="3.1.1.4"/>
    </reaction>
    <physiologicalReaction direction="left-to-right" evidence="11">
        <dbReference type="Rhea" id="RHEA:15802"/>
    </physiologicalReaction>
</comment>
<comment type="catalytic activity">
    <reaction evidence="5">
        <text>1-hexadecanoyl-2-(5Z,8Z,11Z,14Z-eicosatetraenoyl)-sn-glycero-3-phosphocholine + H2O = 1-hexadecanoyl-sn-glycero-3-phosphocholine + (5Z,8Z,11Z,14Z)-eicosatetraenoate + H(+)</text>
        <dbReference type="Rhea" id="RHEA:40427"/>
        <dbReference type="ChEBI" id="CHEBI:15377"/>
        <dbReference type="ChEBI" id="CHEBI:15378"/>
        <dbReference type="ChEBI" id="CHEBI:32395"/>
        <dbReference type="ChEBI" id="CHEBI:72998"/>
        <dbReference type="ChEBI" id="CHEBI:73003"/>
    </reaction>
    <physiologicalReaction direction="left-to-right" evidence="11">
        <dbReference type="Rhea" id="RHEA:40428"/>
    </physiologicalReaction>
</comment>
<comment type="catalytic activity">
    <reaction evidence="5">
        <text>1-hexadecanoyl-2-(9Z,12Z-octadecadienoyl)-sn-glycero-3-phosphocholine + H2O = (9Z,12Z)-octadecadienoate + 1-hexadecanoyl-sn-glycero-3-phosphocholine + H(+)</text>
        <dbReference type="Rhea" id="RHEA:40811"/>
        <dbReference type="ChEBI" id="CHEBI:15377"/>
        <dbReference type="ChEBI" id="CHEBI:15378"/>
        <dbReference type="ChEBI" id="CHEBI:30245"/>
        <dbReference type="ChEBI" id="CHEBI:72998"/>
        <dbReference type="ChEBI" id="CHEBI:73002"/>
    </reaction>
    <physiologicalReaction direction="left-to-right" evidence="11">
        <dbReference type="Rhea" id="RHEA:40812"/>
    </physiologicalReaction>
</comment>
<comment type="catalytic activity">
    <reaction evidence="5">
        <text>1-hexadecanoyl-2-(9Z-octadecenoyl)-sn-glycero-3-phosphocholine + H2O = 1-hexadecanoyl-sn-glycero-3-phosphocholine + (9Z)-octadecenoate + H(+)</text>
        <dbReference type="Rhea" id="RHEA:38779"/>
        <dbReference type="ChEBI" id="CHEBI:15377"/>
        <dbReference type="ChEBI" id="CHEBI:15378"/>
        <dbReference type="ChEBI" id="CHEBI:30823"/>
        <dbReference type="ChEBI" id="CHEBI:72998"/>
        <dbReference type="ChEBI" id="CHEBI:73001"/>
    </reaction>
    <physiologicalReaction direction="left-to-right" evidence="11">
        <dbReference type="Rhea" id="RHEA:38780"/>
    </physiologicalReaction>
</comment>
<comment type="catalytic activity">
    <reaction evidence="2">
        <text>1-hexadecanoyl-2-(5Z,8Z,11Z,14Z-eicosatetraenoyl)-sn-glycero-3-phosphoethanolamine + H2O = 1-hexadecanoyl-sn-glycero-3-phosphoethanolamine + (5Z,8Z,11Z,14Z)-eicosatetraenoate + H(+)</text>
        <dbReference type="Rhea" id="RHEA:40431"/>
        <dbReference type="ChEBI" id="CHEBI:15377"/>
        <dbReference type="ChEBI" id="CHEBI:15378"/>
        <dbReference type="ChEBI" id="CHEBI:32395"/>
        <dbReference type="ChEBI" id="CHEBI:73004"/>
        <dbReference type="ChEBI" id="CHEBI:73009"/>
    </reaction>
    <physiologicalReaction direction="left-to-right" evidence="2">
        <dbReference type="Rhea" id="RHEA:40432"/>
    </physiologicalReaction>
</comment>
<comment type="catalytic activity">
    <reaction evidence="2">
        <text>1-hexadecanoyl-2-(9Z,12Z-octadecadienoyl)-sn-glycero-3-phosphoethanolamine + H2O = 1-hexadecanoyl-sn-glycero-3-phosphoethanolamine + (9Z,12Z)-octadecadienoate + H(+)</text>
        <dbReference type="Rhea" id="RHEA:40815"/>
        <dbReference type="ChEBI" id="CHEBI:15377"/>
        <dbReference type="ChEBI" id="CHEBI:15378"/>
        <dbReference type="ChEBI" id="CHEBI:30245"/>
        <dbReference type="ChEBI" id="CHEBI:73004"/>
        <dbReference type="ChEBI" id="CHEBI:73008"/>
    </reaction>
    <physiologicalReaction direction="left-to-right" evidence="2">
        <dbReference type="Rhea" id="RHEA:40816"/>
    </physiologicalReaction>
</comment>
<comment type="cofactor">
    <cofactor evidence="3">
        <name>Ca(2+)</name>
        <dbReference type="ChEBI" id="CHEBI:29108"/>
    </cofactor>
</comment>
<comment type="activity regulation">
    <text evidence="5">Stimulated by cytosolic Ca(2+).</text>
</comment>
<comment type="biophysicochemical properties">
    <kinetics>
        <Vmax evidence="5">9.23 pmol/min/mg enzyme with 1-palmitoyl-2-arachidonyl-phosphatidylcholine as substrate</Vmax>
        <Vmax evidence="5">58.56 pmol/min/mg enzyme with 1-palmitoyl-2-linoleoyl-phosphatidylcholine as substrate</Vmax>
        <Vmax evidence="5">11.0 pmol/min/mg enzyme with 1-palmitoyl-2-oleoyl-phosphatidylcholine as substrate</Vmax>
    </kinetics>
</comment>
<comment type="pathway">
    <text evidence="5">Lipid metabolism; fatty acid metabolism.</text>
</comment>
<comment type="subcellular location">
    <subcellularLocation>
        <location evidence="2">Cytoplasm</location>
        <location evidence="2">Cytosol</location>
    </subcellularLocation>
    <subcellularLocation>
        <location evidence="2">Membrane</location>
        <topology evidence="2">Peripheral membrane protein</topology>
        <orientation evidence="2">Cytoplasmic side</orientation>
    </subcellularLocation>
    <text evidence="2">Translocates to perinuclear membranes that may correspond to endoplasmic reticulum or Golgi in a calcium-dependent fashion.</text>
</comment>
<comment type="alternative products">
    <event type="alternative splicing"/>
    <isoform>
        <id>Q86XP0-1</id>
        <name>1</name>
        <sequence type="displayed"/>
    </isoform>
    <isoform>
        <id>Q86XP0-2</id>
        <name>2</name>
        <sequence type="described" ref="VSP_019881 VSP_019882"/>
    </isoform>
</comment>
<comment type="tissue specificity">
    <text evidence="5">Expressed in stratified squamous epithelia, such as those in skin and cervix, but not in other tissues (PubMed:14709560). Strongly expressed in the upper spinous layer of the psoriatic epidermis, expressed weakly and discontinuously in atopic dermatitis and mycosis fungoides, and not detected in the epidermis of normal skin (PubMed:14709560).</text>
</comment>
<comment type="domain">
    <text evidence="11">The N-terminal C2 domain mediates the association with lipid membranes upon calcium binding (Probable). An additional second C2 domain may stand in between the C2 domain and the PLA2c domain (Probable).</text>
</comment>
<comment type="miscellaneous">
    <molecule>Isoform 2</molecule>
    <text evidence="10">May be due to an intron retention.</text>
</comment>
<comment type="sequence caution" evidence="10">
    <conflict type="erroneous initiation">
        <sequence resource="EMBL-CDS" id="AAH34571"/>
    </conflict>
    <text>Truncated N-terminus.</text>
</comment>
<gene>
    <name evidence="12" type="primary">PLA2G4D</name>
</gene>
<reference key="1">
    <citation type="journal article" date="2004" name="J. Biol. Chem.">
        <title>Cloning of a gene for a novel epithelium-specific cytosolic phospholipase A2, cPLA2delta, induced in psoriatic skin.</title>
        <authorList>
            <person name="Chiba H."/>
            <person name="Michibata H."/>
            <person name="Wakimoto K."/>
            <person name="Seishima M."/>
            <person name="Kawasaki S."/>
            <person name="Okubo K."/>
            <person name="Mitsui H."/>
            <person name="Torii H."/>
            <person name="Imai Y."/>
        </authorList>
    </citation>
    <scope>NUCLEOTIDE SEQUENCE [MRNA] (ISOFORM 1)</scope>
    <scope>FUNCTION</scope>
    <scope>CATALYTIC ACTIVITY</scope>
    <scope>ACTIVITY REGULATION</scope>
    <scope>BIOPHYSICOCHEMICAL PROPERTIES</scope>
    <scope>PATHWAY</scope>
    <scope>TISSUE SPECIFICITY</scope>
    <scope>DOMAIN</scope>
</reference>
<reference key="2">
    <citation type="journal article" date="2006" name="Nature">
        <title>Analysis of the DNA sequence and duplication history of human chromosome 15.</title>
        <authorList>
            <person name="Zody M.C."/>
            <person name="Garber M."/>
            <person name="Sharpe T."/>
            <person name="Young S.K."/>
            <person name="Rowen L."/>
            <person name="O'Neill K."/>
            <person name="Whittaker C.A."/>
            <person name="Kamal M."/>
            <person name="Chang J.L."/>
            <person name="Cuomo C.A."/>
            <person name="Dewar K."/>
            <person name="FitzGerald M.G."/>
            <person name="Kodira C.D."/>
            <person name="Madan A."/>
            <person name="Qin S."/>
            <person name="Yang X."/>
            <person name="Abbasi N."/>
            <person name="Abouelleil A."/>
            <person name="Arachchi H.M."/>
            <person name="Baradarani L."/>
            <person name="Birditt B."/>
            <person name="Bloom S."/>
            <person name="Bloom T."/>
            <person name="Borowsky M.L."/>
            <person name="Burke J."/>
            <person name="Butler J."/>
            <person name="Cook A."/>
            <person name="DeArellano K."/>
            <person name="DeCaprio D."/>
            <person name="Dorris L. III"/>
            <person name="Dors M."/>
            <person name="Eichler E.E."/>
            <person name="Engels R."/>
            <person name="Fahey J."/>
            <person name="Fleetwood P."/>
            <person name="Friedman C."/>
            <person name="Gearin G."/>
            <person name="Hall J.L."/>
            <person name="Hensley G."/>
            <person name="Johnson E."/>
            <person name="Jones C."/>
            <person name="Kamat A."/>
            <person name="Kaur A."/>
            <person name="Locke D.P."/>
            <person name="Madan A."/>
            <person name="Munson G."/>
            <person name="Jaffe D.B."/>
            <person name="Lui A."/>
            <person name="Macdonald P."/>
            <person name="Mauceli E."/>
            <person name="Naylor J.W."/>
            <person name="Nesbitt R."/>
            <person name="Nicol R."/>
            <person name="O'Leary S.B."/>
            <person name="Ratcliffe A."/>
            <person name="Rounsley S."/>
            <person name="She X."/>
            <person name="Sneddon K.M.B."/>
            <person name="Stewart S."/>
            <person name="Sougnez C."/>
            <person name="Stone S.M."/>
            <person name="Topham K."/>
            <person name="Vincent D."/>
            <person name="Wang S."/>
            <person name="Zimmer A.R."/>
            <person name="Birren B.W."/>
            <person name="Hood L."/>
            <person name="Lander E.S."/>
            <person name="Nusbaum C."/>
        </authorList>
    </citation>
    <scope>NUCLEOTIDE SEQUENCE [LARGE SCALE GENOMIC DNA]</scope>
</reference>
<reference key="3">
    <citation type="journal article" date="2004" name="Genome Res.">
        <title>The status, quality, and expansion of the NIH full-length cDNA project: the Mammalian Gene Collection (MGC).</title>
        <authorList>
            <consortium name="The MGC Project Team"/>
        </authorList>
    </citation>
    <scope>NUCLEOTIDE SEQUENCE [LARGE SCALE MRNA] OF 491-818 (ISOFORM 2)</scope>
    <source>
        <tissue>Brain</tissue>
    </source>
</reference>
<reference evidence="13 14 15" key="4">
    <citation type="journal article" date="2016" name="J. Mol. Biol.">
        <title>Structure of human GIVD cytosolic phospholipase A2 reveals insights into substrate recognition.</title>
        <authorList>
            <person name="Wang H."/>
            <person name="Klein M.G."/>
            <person name="Snell G."/>
            <person name="Lane W."/>
            <person name="Zou H."/>
            <person name="Levin I."/>
            <person name="Li K."/>
            <person name="Sang B.C."/>
        </authorList>
    </citation>
    <scope>X-RAY CRYSTALLOGRAPHY (2.20 ANGSTROMS) OF 2-810 IN COMPLEX WITH SUBSTRATE ANALOG</scope>
    <scope>REGION</scope>
    <scope>ACTIVE SITE</scope>
</reference>
<reference key="5">
    <citation type="journal article" date="2005" name="Prostaglandins Leukot. Essent. Fatty Acids">
        <title>A family based study of the genetic association between the PLA2G4D gene and schizophrenia.</title>
        <authorList>
            <person name="Tao R."/>
            <person name="Yu Y."/>
            <person name="Zhang X."/>
            <person name="Shi J."/>
            <person name="Guo Y."/>
            <person name="Wang C."/>
            <person name="Han B."/>
            <person name="Xu Q."/>
            <person name="Shang H."/>
            <person name="Zhang X."/>
            <person name="Xie L."/>
            <person name="Liu S."/>
            <person name="Ju G."/>
            <person name="Shen Y."/>
            <person name="Wei J."/>
        </authorList>
    </citation>
    <scope>VARIANT GLY-747</scope>
</reference>